<dbReference type="EC" id="2.1.1.71" evidence="1"/>
<dbReference type="EMBL" id="AC011713">
    <property type="protein sequence ID" value="AAF14673.1"/>
    <property type="molecule type" value="Genomic_DNA"/>
</dbReference>
<dbReference type="EMBL" id="CP002684">
    <property type="protein sequence ID" value="AEE36459.1"/>
    <property type="molecule type" value="Genomic_DNA"/>
</dbReference>
<dbReference type="EMBL" id="CP002684">
    <property type="protein sequence ID" value="AEE36460.1"/>
    <property type="molecule type" value="Genomic_DNA"/>
</dbReference>
<dbReference type="EMBL" id="BT043493">
    <property type="protein sequence ID" value="ACF88498.1"/>
    <property type="molecule type" value="mRNA"/>
</dbReference>
<dbReference type="EMBL" id="AK118709">
    <property type="protein sequence ID" value="BAC43303.1"/>
    <property type="status" value="ALT_INIT"/>
    <property type="molecule type" value="mRNA"/>
</dbReference>
<dbReference type="PIR" id="C96841">
    <property type="entry name" value="C96841"/>
</dbReference>
<dbReference type="RefSeq" id="NP_565246.1">
    <property type="nucleotide sequence ID" value="NM_106734.2"/>
</dbReference>
<dbReference type="RefSeq" id="NP_849916.2">
    <property type="nucleotide sequence ID" value="NM_179585.4"/>
</dbReference>
<dbReference type="FunCoup" id="Q9SAH5">
    <property type="interactions" value="359"/>
</dbReference>
<dbReference type="STRING" id="3702.Q9SAH5"/>
<dbReference type="PaxDb" id="3702-AT1G80860.1"/>
<dbReference type="ProteomicsDB" id="235068"/>
<dbReference type="EnsemblPlants" id="AT1G80860.1">
    <property type="protein sequence ID" value="AT1G80860.1"/>
    <property type="gene ID" value="AT1G80860"/>
</dbReference>
<dbReference type="EnsemblPlants" id="AT1G80860.2">
    <property type="protein sequence ID" value="AT1G80860.2"/>
    <property type="gene ID" value="AT1G80860"/>
</dbReference>
<dbReference type="GeneID" id="844425"/>
<dbReference type="Gramene" id="AT1G80860.1">
    <property type="protein sequence ID" value="AT1G80860.1"/>
    <property type="gene ID" value="AT1G80860"/>
</dbReference>
<dbReference type="Gramene" id="AT1G80860.2">
    <property type="protein sequence ID" value="AT1G80860.2"/>
    <property type="gene ID" value="AT1G80860"/>
</dbReference>
<dbReference type="KEGG" id="ath:AT1G80860"/>
<dbReference type="Araport" id="AT1G80860"/>
<dbReference type="TAIR" id="AT1G80860">
    <property type="gene designation" value="PLMT"/>
</dbReference>
<dbReference type="eggNOG" id="ENOG502S2X5">
    <property type="taxonomic scope" value="Eukaryota"/>
</dbReference>
<dbReference type="HOGENOM" id="CLU_111785_0_0_1"/>
<dbReference type="InParanoid" id="Q9SAH5"/>
<dbReference type="OMA" id="LYFWPLI"/>
<dbReference type="PhylomeDB" id="Q9SAH5"/>
<dbReference type="BioCyc" id="ARA:AT1G80860-MONOMER"/>
<dbReference type="BRENDA" id="2.1.1.71">
    <property type="organism ID" value="399"/>
</dbReference>
<dbReference type="UniPathway" id="UPA00753"/>
<dbReference type="PRO" id="PR:Q9SAH5"/>
<dbReference type="Proteomes" id="UP000006548">
    <property type="component" value="Chromosome 1"/>
</dbReference>
<dbReference type="ExpressionAtlas" id="Q9SAH5">
    <property type="expression patterns" value="baseline and differential"/>
</dbReference>
<dbReference type="GO" id="GO:0005789">
    <property type="term" value="C:endoplasmic reticulum membrane"/>
    <property type="evidence" value="ECO:0007669"/>
    <property type="project" value="UniProtKB-SubCell"/>
</dbReference>
<dbReference type="GO" id="GO:0043231">
    <property type="term" value="C:intracellular membrane-bounded organelle"/>
    <property type="evidence" value="ECO:0000314"/>
    <property type="project" value="TAIR"/>
</dbReference>
<dbReference type="GO" id="GO:0000773">
    <property type="term" value="F:phosphatidyl-N-methylethanolamine N-methyltransferase activity"/>
    <property type="evidence" value="ECO:0000314"/>
    <property type="project" value="TAIR"/>
</dbReference>
<dbReference type="GO" id="GO:0004608">
    <property type="term" value="F:phosphatidylethanolamine N-methyltransferase activity"/>
    <property type="evidence" value="ECO:0007669"/>
    <property type="project" value="UniProtKB-UniRule"/>
</dbReference>
<dbReference type="GO" id="GO:0032259">
    <property type="term" value="P:methylation"/>
    <property type="evidence" value="ECO:0007669"/>
    <property type="project" value="UniProtKB-KW"/>
</dbReference>
<dbReference type="GO" id="GO:0006656">
    <property type="term" value="P:phosphatidylcholine biosynthetic process"/>
    <property type="evidence" value="ECO:0007669"/>
    <property type="project" value="UniProtKB-UniRule"/>
</dbReference>
<dbReference type="GO" id="GO:0008654">
    <property type="term" value="P:phospholipid biosynthetic process"/>
    <property type="evidence" value="ECO:0000315"/>
    <property type="project" value="TAIR"/>
</dbReference>
<dbReference type="HAMAP" id="MF_03216">
    <property type="entry name" value="PLMT"/>
    <property type="match status" value="1"/>
</dbReference>
<dbReference type="InterPro" id="IPR024960">
    <property type="entry name" value="PEMT/MFAP"/>
</dbReference>
<dbReference type="InterPro" id="IPR007318">
    <property type="entry name" value="Phopholipid_MeTrfase"/>
</dbReference>
<dbReference type="PANTHER" id="PTHR15458">
    <property type="entry name" value="PHOSPHATIDYLETHANOLAMINE N-METHYLTRANSFERASE"/>
    <property type="match status" value="1"/>
</dbReference>
<dbReference type="PANTHER" id="PTHR15458:SF5">
    <property type="entry name" value="PHOSPHATIDYLETHANOLAMINE N-METHYLTRANSFERASE"/>
    <property type="match status" value="1"/>
</dbReference>
<dbReference type="Pfam" id="PF04191">
    <property type="entry name" value="PEMT"/>
    <property type="match status" value="1"/>
</dbReference>
<keyword id="KW-0256">Endoplasmic reticulum</keyword>
<keyword id="KW-0444">Lipid biosynthesis</keyword>
<keyword id="KW-0443">Lipid metabolism</keyword>
<keyword id="KW-0472">Membrane</keyword>
<keyword id="KW-0489">Methyltransferase</keyword>
<keyword id="KW-0594">Phospholipid biosynthesis</keyword>
<keyword id="KW-1208">Phospholipid metabolism</keyword>
<keyword id="KW-1185">Reference proteome</keyword>
<keyword id="KW-0949">S-adenosyl-L-methionine</keyword>
<keyword id="KW-0808">Transferase</keyword>
<keyword id="KW-0812">Transmembrane</keyword>
<keyword id="KW-1133">Transmembrane helix</keyword>
<reference key="1">
    <citation type="journal article" date="2000" name="Nature">
        <title>Sequence and analysis of chromosome 1 of the plant Arabidopsis thaliana.</title>
        <authorList>
            <person name="Theologis A."/>
            <person name="Ecker J.R."/>
            <person name="Palm C.J."/>
            <person name="Federspiel N.A."/>
            <person name="Kaul S."/>
            <person name="White O."/>
            <person name="Alonso J."/>
            <person name="Altafi H."/>
            <person name="Araujo R."/>
            <person name="Bowman C.L."/>
            <person name="Brooks S.Y."/>
            <person name="Buehler E."/>
            <person name="Chan A."/>
            <person name="Chao Q."/>
            <person name="Chen H."/>
            <person name="Cheuk R.F."/>
            <person name="Chin C.W."/>
            <person name="Chung M.K."/>
            <person name="Conn L."/>
            <person name="Conway A.B."/>
            <person name="Conway A.R."/>
            <person name="Creasy T.H."/>
            <person name="Dewar K."/>
            <person name="Dunn P."/>
            <person name="Etgu P."/>
            <person name="Feldblyum T.V."/>
            <person name="Feng J.-D."/>
            <person name="Fong B."/>
            <person name="Fujii C.Y."/>
            <person name="Gill J.E."/>
            <person name="Goldsmith A.D."/>
            <person name="Haas B."/>
            <person name="Hansen N.F."/>
            <person name="Hughes B."/>
            <person name="Huizar L."/>
            <person name="Hunter J.L."/>
            <person name="Jenkins J."/>
            <person name="Johnson-Hopson C."/>
            <person name="Khan S."/>
            <person name="Khaykin E."/>
            <person name="Kim C.J."/>
            <person name="Koo H.L."/>
            <person name="Kremenetskaia I."/>
            <person name="Kurtz D.B."/>
            <person name="Kwan A."/>
            <person name="Lam B."/>
            <person name="Langin-Hooper S."/>
            <person name="Lee A."/>
            <person name="Lee J.M."/>
            <person name="Lenz C.A."/>
            <person name="Li J.H."/>
            <person name="Li Y.-P."/>
            <person name="Lin X."/>
            <person name="Liu S.X."/>
            <person name="Liu Z.A."/>
            <person name="Luros J.S."/>
            <person name="Maiti R."/>
            <person name="Marziali A."/>
            <person name="Militscher J."/>
            <person name="Miranda M."/>
            <person name="Nguyen M."/>
            <person name="Nierman W.C."/>
            <person name="Osborne B.I."/>
            <person name="Pai G."/>
            <person name="Peterson J."/>
            <person name="Pham P.K."/>
            <person name="Rizzo M."/>
            <person name="Rooney T."/>
            <person name="Rowley D."/>
            <person name="Sakano H."/>
            <person name="Salzberg S.L."/>
            <person name="Schwartz J.R."/>
            <person name="Shinn P."/>
            <person name="Southwick A.M."/>
            <person name="Sun H."/>
            <person name="Tallon L.J."/>
            <person name="Tambunga G."/>
            <person name="Toriumi M.J."/>
            <person name="Town C.D."/>
            <person name="Utterback T."/>
            <person name="Van Aken S."/>
            <person name="Vaysberg M."/>
            <person name="Vysotskaia V.S."/>
            <person name="Walker M."/>
            <person name="Wu D."/>
            <person name="Yu G."/>
            <person name="Fraser C.M."/>
            <person name="Venter J.C."/>
            <person name="Davis R.W."/>
        </authorList>
    </citation>
    <scope>NUCLEOTIDE SEQUENCE [LARGE SCALE GENOMIC DNA]</scope>
    <source>
        <strain>cv. Columbia</strain>
    </source>
</reference>
<reference key="2">
    <citation type="journal article" date="2017" name="Plant J.">
        <title>Araport11: a complete reannotation of the Arabidopsis thaliana reference genome.</title>
        <authorList>
            <person name="Cheng C.Y."/>
            <person name="Krishnakumar V."/>
            <person name="Chan A.P."/>
            <person name="Thibaud-Nissen F."/>
            <person name="Schobel S."/>
            <person name="Town C.D."/>
        </authorList>
    </citation>
    <scope>GENOME REANNOTATION</scope>
    <source>
        <strain>cv. Columbia</strain>
    </source>
</reference>
<reference key="3">
    <citation type="submission" date="2008-07" db="EMBL/GenBank/DDBJ databases">
        <title>Arabidopsis ORF clones.</title>
        <authorList>
            <person name="De Los Reyes C."/>
            <person name="Quan R."/>
            <person name="Chen H."/>
            <person name="Bautista V.R."/>
            <person name="Kim C.J."/>
            <person name="Ecker J.R."/>
        </authorList>
    </citation>
    <scope>NUCLEOTIDE SEQUENCE [LARGE SCALE MRNA]</scope>
</reference>
<reference key="4">
    <citation type="journal article" date="2002" name="Science">
        <title>Functional annotation of a full-length Arabidopsis cDNA collection.</title>
        <authorList>
            <person name="Seki M."/>
            <person name="Narusaka M."/>
            <person name="Kamiya A."/>
            <person name="Ishida J."/>
            <person name="Satou M."/>
            <person name="Sakurai T."/>
            <person name="Nakajima M."/>
            <person name="Enju A."/>
            <person name="Akiyama K."/>
            <person name="Oono Y."/>
            <person name="Muramatsu M."/>
            <person name="Hayashizaki Y."/>
            <person name="Kawai J."/>
            <person name="Carninci P."/>
            <person name="Itoh M."/>
            <person name="Ishii Y."/>
            <person name="Arakawa T."/>
            <person name="Shibata K."/>
            <person name="Shinagawa A."/>
            <person name="Shinozaki K."/>
        </authorList>
    </citation>
    <scope>NUCLEOTIDE SEQUENCE [LARGE SCALE MRNA] OF 17-164</scope>
    <source>
        <strain>cv. Columbia</strain>
    </source>
</reference>
<reference key="5">
    <citation type="journal article" date="2009" name="J. Biol. Chem.">
        <title>Functional characterization of phospholipid N-methyltransferases from Arabidopsis and soybean.</title>
        <authorList>
            <person name="Keogh M.R."/>
            <person name="Courtney P.D."/>
            <person name="Kinney A.J."/>
            <person name="Dewey R.E."/>
        </authorList>
    </citation>
    <scope>FUNCTION</scope>
    <scope>DISRUPTION PHENOTYPE</scope>
</reference>
<gene>
    <name type="primary">PLMT</name>
    <name type="ordered locus">At1g80860</name>
    <name type="ORF">F23A5.21</name>
</gene>
<accession>Q9SAH5</accession>
<accession>Q8GWP8</accession>
<name>PLMT_ARATH</name>
<protein>
    <recommendedName>
        <fullName evidence="1">Phosphatidyl-N-methylethanolamine N-methyltransferase</fullName>
        <ecNumber evidence="1">2.1.1.71</ecNumber>
    </recommendedName>
    <alternativeName>
        <fullName evidence="1">Phospholipid methyltransferase</fullName>
        <shortName evidence="1">PLMT</shortName>
    </alternativeName>
</protein>
<proteinExistence type="evidence at transcript level"/>
<feature type="chain" id="PRO_0000425530" description="Phosphatidyl-N-methylethanolamine N-methyltransferase">
    <location>
        <begin position="1"/>
        <end position="164"/>
    </location>
</feature>
<feature type="intramembrane region" description="Helical" evidence="1">
    <location>
        <begin position="1"/>
        <end position="21"/>
    </location>
</feature>
<feature type="topological domain" description="Lumenal" evidence="1">
    <location>
        <begin position="22"/>
        <end position="30"/>
    </location>
</feature>
<feature type="transmembrane region" description="Helical" evidence="1">
    <location>
        <begin position="31"/>
        <end position="52"/>
    </location>
</feature>
<feature type="topological domain" description="Cytoplasmic" evidence="1">
    <location>
        <begin position="53"/>
        <end position="69"/>
    </location>
</feature>
<feature type="transmembrane region" description="Helical" evidence="1">
    <location>
        <begin position="70"/>
        <end position="90"/>
    </location>
</feature>
<feature type="topological domain" description="Lumenal" evidence="1">
    <location>
        <begin position="91"/>
        <end position="131"/>
    </location>
</feature>
<feature type="transmembrane region" description="Helical" evidence="1">
    <location>
        <begin position="132"/>
        <end position="151"/>
    </location>
</feature>
<feature type="topological domain" description="Cytoplasmic" evidence="1">
    <location>
        <begin position="152"/>
        <end position="164"/>
    </location>
</feature>
<feature type="binding site" evidence="1">
    <location>
        <begin position="74"/>
        <end position="76"/>
    </location>
    <ligand>
        <name>S-adenosyl-L-methionine</name>
        <dbReference type="ChEBI" id="CHEBI:59789"/>
    </ligand>
</feature>
<feature type="binding site" evidence="1">
    <location>
        <begin position="154"/>
        <end position="155"/>
    </location>
    <ligand>
        <name>S-adenosyl-L-methionine</name>
        <dbReference type="ChEBI" id="CHEBI:59789"/>
    </ligand>
</feature>
<comment type="function">
    <text evidence="1 2">Catalyzes the second two steps of the methylation pathway of phosphatidylcholine biosynthesis, the SAM-dependent methylation of phosphatidylmonomethylethanolamine (PMME) to phosphatidyldimethylethanolamine (PDME) and of PDME to phosphatidylcholine (PC).</text>
</comment>
<comment type="catalytic activity">
    <reaction evidence="1">
        <text>a 1,2-diacyl-sn-glycero-3-phospho-N-methylethanolamine + S-adenosyl-L-methionine = a 1,2-diacyl-sn-glycero-3-phospho-N,N-dimethylethanolamine + S-adenosyl-L-homocysteine + H(+)</text>
        <dbReference type="Rhea" id="RHEA:32735"/>
        <dbReference type="ChEBI" id="CHEBI:15378"/>
        <dbReference type="ChEBI" id="CHEBI:57856"/>
        <dbReference type="ChEBI" id="CHEBI:59789"/>
        <dbReference type="ChEBI" id="CHEBI:64572"/>
        <dbReference type="ChEBI" id="CHEBI:64573"/>
        <dbReference type="EC" id="2.1.1.71"/>
    </reaction>
</comment>
<comment type="catalytic activity">
    <reaction evidence="1">
        <text>a 1,2-diacyl-sn-glycero-3-phospho-N,N-dimethylethanolamine + S-adenosyl-L-methionine = a 1,2-diacyl-sn-glycero-3-phosphocholine + S-adenosyl-L-homocysteine + H(+)</text>
        <dbReference type="Rhea" id="RHEA:32739"/>
        <dbReference type="ChEBI" id="CHEBI:15378"/>
        <dbReference type="ChEBI" id="CHEBI:57643"/>
        <dbReference type="ChEBI" id="CHEBI:57856"/>
        <dbReference type="ChEBI" id="CHEBI:59789"/>
        <dbReference type="ChEBI" id="CHEBI:64572"/>
        <dbReference type="EC" id="2.1.1.71"/>
    </reaction>
</comment>
<comment type="pathway">
    <text evidence="1">Phospholipid metabolism; phosphatidylcholine biosynthesis.</text>
</comment>
<comment type="subcellular location">
    <subcellularLocation>
        <location evidence="1">Endoplasmic reticulum membrane</location>
        <topology evidence="1">Multi-pass membrane protein</topology>
    </subcellularLocation>
</comment>
<comment type="disruption phenotype">
    <text evidence="2">No visible phenotype under normal growth conditions.</text>
</comment>
<comment type="similarity">
    <text evidence="1">Belongs to the class VI-like SAM-binding methyltransferase superfamily. PEMT/PEM2 methyltransferase family.</text>
</comment>
<comment type="sequence caution" evidence="3">
    <conflict type="erroneous initiation">
        <sequence resource="EMBL-CDS" id="BAC43303"/>
    </conflict>
    <text>Truncated N-terminus.</text>
</comment>
<organism>
    <name type="scientific">Arabidopsis thaliana</name>
    <name type="common">Mouse-ear cress</name>
    <dbReference type="NCBI Taxonomy" id="3702"/>
    <lineage>
        <taxon>Eukaryota</taxon>
        <taxon>Viridiplantae</taxon>
        <taxon>Streptophyta</taxon>
        <taxon>Embryophyta</taxon>
        <taxon>Tracheophyta</taxon>
        <taxon>Spermatophyta</taxon>
        <taxon>Magnoliopsida</taxon>
        <taxon>eudicotyledons</taxon>
        <taxon>Gunneridae</taxon>
        <taxon>Pentapetalae</taxon>
        <taxon>rosids</taxon>
        <taxon>malvids</taxon>
        <taxon>Brassicales</taxon>
        <taxon>Brassicaceae</taxon>
        <taxon>Camelineae</taxon>
        <taxon>Arabidopsis</taxon>
    </lineage>
</organism>
<evidence type="ECO:0000255" key="1">
    <source>
        <dbReference type="HAMAP-Rule" id="MF_03216"/>
    </source>
</evidence>
<evidence type="ECO:0000269" key="2">
    <source>
    </source>
</evidence>
<evidence type="ECO:0000305" key="3"/>
<sequence length="164" mass="18819">MGLLAAIGVLLPFPFYWWLWTNAQSWVNLCGRERDPSTVMARVSHVLKAAQLLSLFSVASLSWPPPLYFWPLMAFGQFLNFRVYQLLGEAGTYYGVRFGKNIPWVTEFPFGVIRDPQYVGSIMSLLACLSWVPFQYILLWSLGYVFMMFLESKEDPNARAKSIS</sequence>